<accession>P0ADB9</accession>
<accession>P56549</accession>
<organism>
    <name type="scientific">Escherichia coli O157:H7</name>
    <dbReference type="NCBI Taxonomy" id="83334"/>
    <lineage>
        <taxon>Bacteria</taxon>
        <taxon>Pseudomonadati</taxon>
        <taxon>Pseudomonadota</taxon>
        <taxon>Gammaproteobacteria</taxon>
        <taxon>Enterobacterales</taxon>
        <taxon>Enterobacteriaceae</taxon>
        <taxon>Escherichia</taxon>
    </lineage>
</organism>
<evidence type="ECO:0000250" key="1"/>
<evidence type="ECO:0000255" key="2">
    <source>
        <dbReference type="PROSITE-ProRule" id="PRU00303"/>
    </source>
</evidence>
<evidence type="ECO:0000305" key="3"/>
<gene>
    <name type="primary">ecnB</name>
    <name type="ordered locus">Z5754</name>
    <name type="ordered locus">ECs5128.2</name>
</gene>
<comment type="function">
    <text evidence="1">Plays a role in the bacteriolysis. Is activated under conditions of high osmolarity by the factor sigma S. Entericidin A functions as an antidote (By similarity).</text>
</comment>
<comment type="subcellular location">
    <subcellularLocation>
        <location evidence="2">Cell membrane</location>
        <topology evidence="2">Lipid-anchor</topology>
    </subcellularLocation>
</comment>
<comment type="similarity">
    <text evidence="3">Belongs to the EcnA/EcnB lipoprotein family.</text>
</comment>
<proteinExistence type="inferred from homology"/>
<name>ECNB_ECO57</name>
<protein>
    <recommendedName>
        <fullName>Entericidin B</fullName>
    </recommendedName>
</protein>
<feature type="signal peptide" evidence="2">
    <location>
        <begin position="1"/>
        <end position="21"/>
    </location>
</feature>
<feature type="peptide" id="PRO_0000043192" description="Entericidin B">
    <location>
        <begin position="22"/>
        <end position="48"/>
    </location>
</feature>
<feature type="lipid moiety-binding region" description="N-palmitoyl cysteine" evidence="3">
    <location>
        <position position="22"/>
    </location>
</feature>
<feature type="lipid moiety-binding region" description="S-diacylglycerol cysteine" evidence="3">
    <location>
        <position position="22"/>
    </location>
</feature>
<reference key="1">
    <citation type="journal article" date="2001" name="Nature">
        <title>Genome sequence of enterohaemorrhagic Escherichia coli O157:H7.</title>
        <authorList>
            <person name="Perna N.T."/>
            <person name="Plunkett G. III"/>
            <person name="Burland V."/>
            <person name="Mau B."/>
            <person name="Glasner J.D."/>
            <person name="Rose D.J."/>
            <person name="Mayhew G.F."/>
            <person name="Evans P.S."/>
            <person name="Gregor J."/>
            <person name="Kirkpatrick H.A."/>
            <person name="Posfai G."/>
            <person name="Hackett J."/>
            <person name="Klink S."/>
            <person name="Boutin A."/>
            <person name="Shao Y."/>
            <person name="Miller L."/>
            <person name="Grotbeck E.J."/>
            <person name="Davis N.W."/>
            <person name="Lim A."/>
            <person name="Dimalanta E.T."/>
            <person name="Potamousis K."/>
            <person name="Apodaca J."/>
            <person name="Anantharaman T.S."/>
            <person name="Lin J."/>
            <person name="Yen G."/>
            <person name="Schwartz D.C."/>
            <person name="Welch R.A."/>
            <person name="Blattner F.R."/>
        </authorList>
    </citation>
    <scope>NUCLEOTIDE SEQUENCE [LARGE SCALE GENOMIC DNA]</scope>
    <source>
        <strain>O157:H7 / EDL933 / ATCC 700927 / EHEC</strain>
    </source>
</reference>
<reference key="2">
    <citation type="journal article" date="2001" name="DNA Res.">
        <title>Complete genome sequence of enterohemorrhagic Escherichia coli O157:H7 and genomic comparison with a laboratory strain K-12.</title>
        <authorList>
            <person name="Hayashi T."/>
            <person name="Makino K."/>
            <person name="Ohnishi M."/>
            <person name="Kurokawa K."/>
            <person name="Ishii K."/>
            <person name="Yokoyama K."/>
            <person name="Han C.-G."/>
            <person name="Ohtsubo E."/>
            <person name="Nakayama K."/>
            <person name="Murata T."/>
            <person name="Tanaka M."/>
            <person name="Tobe T."/>
            <person name="Iida T."/>
            <person name="Takami H."/>
            <person name="Honda T."/>
            <person name="Sasakawa C."/>
            <person name="Ogasawara N."/>
            <person name="Yasunaga T."/>
            <person name="Kuhara S."/>
            <person name="Shiba T."/>
            <person name="Hattori M."/>
            <person name="Shinagawa H."/>
        </authorList>
    </citation>
    <scope>NUCLEOTIDE SEQUENCE [LARGE SCALE GENOMIC DNA]</scope>
    <source>
        <strain>O157:H7 / Sakai / RIMD 0509952 / EHEC</strain>
    </source>
</reference>
<keyword id="KW-1003">Cell membrane</keyword>
<keyword id="KW-0449">Lipoprotein</keyword>
<keyword id="KW-0472">Membrane</keyword>
<keyword id="KW-0564">Palmitate</keyword>
<keyword id="KW-1185">Reference proteome</keyword>
<keyword id="KW-0732">Signal</keyword>
<dbReference type="EMBL" id="AE005174">
    <property type="protein sequence ID" value="AAG59348.1"/>
    <property type="molecule type" value="Genomic_DNA"/>
</dbReference>
<dbReference type="EMBL" id="BA000007">
    <property type="status" value="NOT_ANNOTATED_CDS"/>
    <property type="molecule type" value="Genomic_DNA"/>
</dbReference>
<dbReference type="PIR" id="H86110">
    <property type="entry name" value="H86110"/>
</dbReference>
<dbReference type="RefSeq" id="WP_000239596.1">
    <property type="nucleotide sequence ID" value="NZ_VOAI01000008.1"/>
</dbReference>
<dbReference type="STRING" id="155864.Z5754"/>
<dbReference type="GeneID" id="93777675"/>
<dbReference type="KEGG" id="ece:Z5754"/>
<dbReference type="PATRIC" id="fig|83334.175.peg.5688"/>
<dbReference type="eggNOG" id="COG5510">
    <property type="taxonomic scope" value="Bacteria"/>
</dbReference>
<dbReference type="Proteomes" id="UP000000558">
    <property type="component" value="Chromosome"/>
</dbReference>
<dbReference type="Proteomes" id="UP000002519">
    <property type="component" value="Chromosome"/>
</dbReference>
<dbReference type="GO" id="GO:0005886">
    <property type="term" value="C:plasma membrane"/>
    <property type="evidence" value="ECO:0007669"/>
    <property type="project" value="UniProtKB-SubCell"/>
</dbReference>
<dbReference type="GO" id="GO:0009636">
    <property type="term" value="P:response to toxic substance"/>
    <property type="evidence" value="ECO:0007669"/>
    <property type="project" value="InterPro"/>
</dbReference>
<dbReference type="InterPro" id="IPR012556">
    <property type="entry name" value="Entericidin"/>
</dbReference>
<dbReference type="NCBIfam" id="NF007487">
    <property type="entry name" value="PRK10081.1"/>
    <property type="match status" value="1"/>
</dbReference>
<dbReference type="Pfam" id="PF08085">
    <property type="entry name" value="Entericidin"/>
    <property type="match status" value="1"/>
</dbReference>
<dbReference type="PROSITE" id="PS51257">
    <property type="entry name" value="PROKAR_LIPOPROTEIN"/>
    <property type="match status" value="1"/>
</dbReference>
<sequence length="48" mass="4810">MVKKTIAAIFSVLVLSTVLTACNTTRGVGEDISDGGNAISGAATKAQQ</sequence>